<evidence type="ECO:0000255" key="1">
    <source>
        <dbReference type="HAMAP-Rule" id="MF_00156"/>
    </source>
</evidence>
<dbReference type="EC" id="2.1.2.11" evidence="1"/>
<dbReference type="EMBL" id="CP000103">
    <property type="protein sequence ID" value="ABB74182.1"/>
    <property type="molecule type" value="Genomic_DNA"/>
</dbReference>
<dbReference type="RefSeq" id="WP_011380227.1">
    <property type="nucleotide sequence ID" value="NC_007614.1"/>
</dbReference>
<dbReference type="SMR" id="Q2YAN9"/>
<dbReference type="STRING" id="323848.Nmul_A0879"/>
<dbReference type="KEGG" id="nmu:Nmul_A0879"/>
<dbReference type="eggNOG" id="COG0413">
    <property type="taxonomic scope" value="Bacteria"/>
</dbReference>
<dbReference type="HOGENOM" id="CLU_036645_1_0_4"/>
<dbReference type="OrthoDB" id="9781789at2"/>
<dbReference type="UniPathway" id="UPA00028">
    <property type="reaction ID" value="UER00003"/>
</dbReference>
<dbReference type="Proteomes" id="UP000002718">
    <property type="component" value="Chromosome"/>
</dbReference>
<dbReference type="GO" id="GO:0005737">
    <property type="term" value="C:cytoplasm"/>
    <property type="evidence" value="ECO:0007669"/>
    <property type="project" value="UniProtKB-SubCell"/>
</dbReference>
<dbReference type="GO" id="GO:0003864">
    <property type="term" value="F:3-methyl-2-oxobutanoate hydroxymethyltransferase activity"/>
    <property type="evidence" value="ECO:0007669"/>
    <property type="project" value="UniProtKB-UniRule"/>
</dbReference>
<dbReference type="GO" id="GO:0000287">
    <property type="term" value="F:magnesium ion binding"/>
    <property type="evidence" value="ECO:0007669"/>
    <property type="project" value="TreeGrafter"/>
</dbReference>
<dbReference type="GO" id="GO:0015940">
    <property type="term" value="P:pantothenate biosynthetic process"/>
    <property type="evidence" value="ECO:0007669"/>
    <property type="project" value="UniProtKB-UniRule"/>
</dbReference>
<dbReference type="CDD" id="cd06557">
    <property type="entry name" value="KPHMT-like"/>
    <property type="match status" value="1"/>
</dbReference>
<dbReference type="FunFam" id="3.20.20.60:FF:000003">
    <property type="entry name" value="3-methyl-2-oxobutanoate hydroxymethyltransferase"/>
    <property type="match status" value="1"/>
</dbReference>
<dbReference type="Gene3D" id="3.20.20.60">
    <property type="entry name" value="Phosphoenolpyruvate-binding domains"/>
    <property type="match status" value="1"/>
</dbReference>
<dbReference type="HAMAP" id="MF_00156">
    <property type="entry name" value="PanB"/>
    <property type="match status" value="1"/>
</dbReference>
<dbReference type="InterPro" id="IPR003700">
    <property type="entry name" value="Pantoate_hydroxy_MeTrfase"/>
</dbReference>
<dbReference type="InterPro" id="IPR015813">
    <property type="entry name" value="Pyrv/PenolPyrv_kinase-like_dom"/>
</dbReference>
<dbReference type="InterPro" id="IPR040442">
    <property type="entry name" value="Pyrv_kinase-like_dom_sf"/>
</dbReference>
<dbReference type="NCBIfam" id="TIGR00222">
    <property type="entry name" value="panB"/>
    <property type="match status" value="1"/>
</dbReference>
<dbReference type="NCBIfam" id="NF001452">
    <property type="entry name" value="PRK00311.1"/>
    <property type="match status" value="1"/>
</dbReference>
<dbReference type="PANTHER" id="PTHR20881">
    <property type="entry name" value="3-METHYL-2-OXOBUTANOATE HYDROXYMETHYLTRANSFERASE"/>
    <property type="match status" value="1"/>
</dbReference>
<dbReference type="PANTHER" id="PTHR20881:SF0">
    <property type="entry name" value="3-METHYL-2-OXOBUTANOATE HYDROXYMETHYLTRANSFERASE"/>
    <property type="match status" value="1"/>
</dbReference>
<dbReference type="Pfam" id="PF02548">
    <property type="entry name" value="Pantoate_transf"/>
    <property type="match status" value="1"/>
</dbReference>
<dbReference type="PIRSF" id="PIRSF000388">
    <property type="entry name" value="Pantoate_hydroxy_MeTrfase"/>
    <property type="match status" value="1"/>
</dbReference>
<dbReference type="SUPFAM" id="SSF51621">
    <property type="entry name" value="Phosphoenolpyruvate/pyruvate domain"/>
    <property type="match status" value="1"/>
</dbReference>
<protein>
    <recommendedName>
        <fullName evidence="1">3-methyl-2-oxobutanoate hydroxymethyltransferase</fullName>
        <ecNumber evidence="1">2.1.2.11</ecNumber>
    </recommendedName>
    <alternativeName>
        <fullName evidence="1">Ketopantoate hydroxymethyltransferase</fullName>
        <shortName evidence="1">KPHMT</shortName>
    </alternativeName>
</protein>
<keyword id="KW-0963">Cytoplasm</keyword>
<keyword id="KW-0460">Magnesium</keyword>
<keyword id="KW-0479">Metal-binding</keyword>
<keyword id="KW-0566">Pantothenate biosynthesis</keyword>
<keyword id="KW-1185">Reference proteome</keyword>
<keyword id="KW-0808">Transferase</keyword>
<reference key="1">
    <citation type="submission" date="2005-08" db="EMBL/GenBank/DDBJ databases">
        <title>Complete sequence of chromosome 1 of Nitrosospira multiformis ATCC 25196.</title>
        <authorList>
            <person name="Copeland A."/>
            <person name="Lucas S."/>
            <person name="Lapidus A."/>
            <person name="Barry K."/>
            <person name="Detter J.C."/>
            <person name="Glavina T."/>
            <person name="Hammon N."/>
            <person name="Israni S."/>
            <person name="Pitluck S."/>
            <person name="Chain P."/>
            <person name="Malfatti S."/>
            <person name="Shin M."/>
            <person name="Vergez L."/>
            <person name="Schmutz J."/>
            <person name="Larimer F."/>
            <person name="Land M."/>
            <person name="Hauser L."/>
            <person name="Kyrpides N."/>
            <person name="Lykidis A."/>
            <person name="Richardson P."/>
        </authorList>
    </citation>
    <scope>NUCLEOTIDE SEQUENCE [LARGE SCALE GENOMIC DNA]</scope>
    <source>
        <strain>ATCC 25196 / NCIMB 11849 / C 71</strain>
    </source>
</reference>
<gene>
    <name evidence="1" type="primary">panB</name>
    <name type="ordered locus">Nmul_A0879</name>
</gene>
<accession>Q2YAN9</accession>
<organism>
    <name type="scientific">Nitrosospira multiformis (strain ATCC 25196 / NCIMB 11849 / C 71)</name>
    <dbReference type="NCBI Taxonomy" id="323848"/>
    <lineage>
        <taxon>Bacteria</taxon>
        <taxon>Pseudomonadati</taxon>
        <taxon>Pseudomonadota</taxon>
        <taxon>Betaproteobacteria</taxon>
        <taxon>Nitrosomonadales</taxon>
        <taxon>Nitrosomonadaceae</taxon>
        <taxon>Nitrosospira</taxon>
    </lineage>
</organism>
<feature type="chain" id="PRO_0000297311" description="3-methyl-2-oxobutanoate hydroxymethyltransferase">
    <location>
        <begin position="1"/>
        <end position="263"/>
    </location>
</feature>
<feature type="active site" description="Proton acceptor" evidence="1">
    <location>
        <position position="181"/>
    </location>
</feature>
<feature type="binding site" evidence="1">
    <location>
        <begin position="44"/>
        <end position="45"/>
    </location>
    <ligand>
        <name>3-methyl-2-oxobutanoate</name>
        <dbReference type="ChEBI" id="CHEBI:11851"/>
    </ligand>
</feature>
<feature type="binding site" evidence="1">
    <location>
        <position position="44"/>
    </location>
    <ligand>
        <name>Mg(2+)</name>
        <dbReference type="ChEBI" id="CHEBI:18420"/>
    </ligand>
</feature>
<feature type="binding site" evidence="1">
    <location>
        <position position="83"/>
    </location>
    <ligand>
        <name>3-methyl-2-oxobutanoate</name>
        <dbReference type="ChEBI" id="CHEBI:11851"/>
    </ligand>
</feature>
<feature type="binding site" evidence="1">
    <location>
        <position position="83"/>
    </location>
    <ligand>
        <name>Mg(2+)</name>
        <dbReference type="ChEBI" id="CHEBI:18420"/>
    </ligand>
</feature>
<feature type="binding site" evidence="1">
    <location>
        <position position="112"/>
    </location>
    <ligand>
        <name>3-methyl-2-oxobutanoate</name>
        <dbReference type="ChEBI" id="CHEBI:11851"/>
    </ligand>
</feature>
<feature type="binding site" evidence="1">
    <location>
        <position position="114"/>
    </location>
    <ligand>
        <name>Mg(2+)</name>
        <dbReference type="ChEBI" id="CHEBI:18420"/>
    </ligand>
</feature>
<name>PANB_NITMU</name>
<sequence length="263" mass="28126">MRITQDVFQKMRDDGEKIAIVTCYDASFAALLERAGVDILLVGDSLGNVIQGEETTLPVTLDDMIYHTLCVKRGASTAFIMTDMPFGTSQVSPEETFRNAAELMAAGANMVKIEGGSVMAETVEFLTQRGIPVCAHIGLTPQSVNQLGGYKVQGKTDYEAEQLLEDAVALEQAGAGMLLMEVVPAALAAQVTRTLSIPTIGIGAGKDCSAQVLVLYDMLGIYSGKKARFMKNFLTGAGSIEEAVQNYTRAVKTGEFPGPEHTF</sequence>
<comment type="function">
    <text evidence="1">Catalyzes the reversible reaction in which hydroxymethyl group from 5,10-methylenetetrahydrofolate is transferred onto alpha-ketoisovalerate to form ketopantoate.</text>
</comment>
<comment type="catalytic activity">
    <reaction evidence="1">
        <text>3-methyl-2-oxobutanoate + (6R)-5,10-methylene-5,6,7,8-tetrahydrofolate + H2O = 2-dehydropantoate + (6S)-5,6,7,8-tetrahydrofolate</text>
        <dbReference type="Rhea" id="RHEA:11824"/>
        <dbReference type="ChEBI" id="CHEBI:11561"/>
        <dbReference type="ChEBI" id="CHEBI:11851"/>
        <dbReference type="ChEBI" id="CHEBI:15377"/>
        <dbReference type="ChEBI" id="CHEBI:15636"/>
        <dbReference type="ChEBI" id="CHEBI:57453"/>
        <dbReference type="EC" id="2.1.2.11"/>
    </reaction>
</comment>
<comment type="cofactor">
    <cofactor evidence="1">
        <name>Mg(2+)</name>
        <dbReference type="ChEBI" id="CHEBI:18420"/>
    </cofactor>
    <text evidence="1">Binds 1 Mg(2+) ion per subunit.</text>
</comment>
<comment type="pathway">
    <text evidence="1">Cofactor biosynthesis; (R)-pantothenate biosynthesis; (R)-pantoate from 3-methyl-2-oxobutanoate: step 1/2.</text>
</comment>
<comment type="subunit">
    <text evidence="1">Homodecamer; pentamer of dimers.</text>
</comment>
<comment type="subcellular location">
    <subcellularLocation>
        <location evidence="1">Cytoplasm</location>
    </subcellularLocation>
</comment>
<comment type="similarity">
    <text evidence="1">Belongs to the PanB family.</text>
</comment>
<proteinExistence type="inferred from homology"/>